<proteinExistence type="inferred from homology"/>
<protein>
    <recommendedName>
        <fullName evidence="2">Formamidopyrimidine-DNA glycosylase</fullName>
        <shortName evidence="2">Fapy-DNA glycosylase</shortName>
        <ecNumber evidence="2">3.2.2.23</ecNumber>
    </recommendedName>
    <alternativeName>
        <fullName evidence="2">DNA-(apurinic or apyrimidinic site) lyase MutM</fullName>
        <shortName evidence="2">AP lyase MutM</shortName>
        <ecNumber evidence="2">4.2.99.18</ecNumber>
    </alternativeName>
</protein>
<dbReference type="EC" id="3.2.2.23" evidence="2"/>
<dbReference type="EC" id="4.2.99.18" evidence="2"/>
<dbReference type="EMBL" id="CP000529">
    <property type="protein sequence ID" value="ABM36220.1"/>
    <property type="molecule type" value="Genomic_DNA"/>
</dbReference>
<dbReference type="RefSeq" id="WP_011800314.1">
    <property type="nucleotide sequence ID" value="NC_008781.1"/>
</dbReference>
<dbReference type="SMR" id="A1VKP2"/>
<dbReference type="STRING" id="365044.Pnap_0903"/>
<dbReference type="KEGG" id="pna:Pnap_0903"/>
<dbReference type="eggNOG" id="COG0266">
    <property type="taxonomic scope" value="Bacteria"/>
</dbReference>
<dbReference type="HOGENOM" id="CLU_038423_1_1_4"/>
<dbReference type="OrthoDB" id="9800855at2"/>
<dbReference type="Proteomes" id="UP000000644">
    <property type="component" value="Chromosome"/>
</dbReference>
<dbReference type="GO" id="GO:0034039">
    <property type="term" value="F:8-oxo-7,8-dihydroguanine DNA N-glycosylase activity"/>
    <property type="evidence" value="ECO:0007669"/>
    <property type="project" value="TreeGrafter"/>
</dbReference>
<dbReference type="GO" id="GO:0140078">
    <property type="term" value="F:class I DNA-(apurinic or apyrimidinic site) endonuclease activity"/>
    <property type="evidence" value="ECO:0007669"/>
    <property type="project" value="UniProtKB-EC"/>
</dbReference>
<dbReference type="GO" id="GO:0003684">
    <property type="term" value="F:damaged DNA binding"/>
    <property type="evidence" value="ECO:0007669"/>
    <property type="project" value="InterPro"/>
</dbReference>
<dbReference type="GO" id="GO:0008270">
    <property type="term" value="F:zinc ion binding"/>
    <property type="evidence" value="ECO:0007669"/>
    <property type="project" value="UniProtKB-UniRule"/>
</dbReference>
<dbReference type="GO" id="GO:0006284">
    <property type="term" value="P:base-excision repair"/>
    <property type="evidence" value="ECO:0007669"/>
    <property type="project" value="InterPro"/>
</dbReference>
<dbReference type="CDD" id="cd08966">
    <property type="entry name" value="EcFpg-like_N"/>
    <property type="match status" value="1"/>
</dbReference>
<dbReference type="FunFam" id="1.10.8.50:FF:000003">
    <property type="entry name" value="Formamidopyrimidine-DNA glycosylase"/>
    <property type="match status" value="1"/>
</dbReference>
<dbReference type="Gene3D" id="1.10.8.50">
    <property type="match status" value="1"/>
</dbReference>
<dbReference type="Gene3D" id="3.20.190.10">
    <property type="entry name" value="MutM-like, N-terminal"/>
    <property type="match status" value="1"/>
</dbReference>
<dbReference type="HAMAP" id="MF_00103">
    <property type="entry name" value="Fapy_DNA_glycosyl"/>
    <property type="match status" value="1"/>
</dbReference>
<dbReference type="InterPro" id="IPR015886">
    <property type="entry name" value="DNA_glyclase/AP_lyase_DNA-bd"/>
</dbReference>
<dbReference type="InterPro" id="IPR015887">
    <property type="entry name" value="DNA_glyclase_Znf_dom_DNA_BS"/>
</dbReference>
<dbReference type="InterPro" id="IPR020629">
    <property type="entry name" value="Formamido-pyr_DNA_Glyclase"/>
</dbReference>
<dbReference type="InterPro" id="IPR012319">
    <property type="entry name" value="FPG_cat"/>
</dbReference>
<dbReference type="InterPro" id="IPR035937">
    <property type="entry name" value="MutM-like_N-ter"/>
</dbReference>
<dbReference type="InterPro" id="IPR010979">
    <property type="entry name" value="Ribosomal_uS13-like_H2TH"/>
</dbReference>
<dbReference type="InterPro" id="IPR000214">
    <property type="entry name" value="Znf_DNA_glyclase/AP_lyase"/>
</dbReference>
<dbReference type="InterPro" id="IPR010663">
    <property type="entry name" value="Znf_FPG/IleRS"/>
</dbReference>
<dbReference type="NCBIfam" id="TIGR00577">
    <property type="entry name" value="fpg"/>
    <property type="match status" value="1"/>
</dbReference>
<dbReference type="NCBIfam" id="NF002211">
    <property type="entry name" value="PRK01103.1"/>
    <property type="match status" value="1"/>
</dbReference>
<dbReference type="PANTHER" id="PTHR22993">
    <property type="entry name" value="FORMAMIDOPYRIMIDINE-DNA GLYCOSYLASE"/>
    <property type="match status" value="1"/>
</dbReference>
<dbReference type="PANTHER" id="PTHR22993:SF9">
    <property type="entry name" value="FORMAMIDOPYRIMIDINE-DNA GLYCOSYLASE"/>
    <property type="match status" value="1"/>
</dbReference>
<dbReference type="Pfam" id="PF01149">
    <property type="entry name" value="Fapy_DNA_glyco"/>
    <property type="match status" value="1"/>
</dbReference>
<dbReference type="Pfam" id="PF06831">
    <property type="entry name" value="H2TH"/>
    <property type="match status" value="1"/>
</dbReference>
<dbReference type="Pfam" id="PF06827">
    <property type="entry name" value="zf-FPG_IleRS"/>
    <property type="match status" value="1"/>
</dbReference>
<dbReference type="SMART" id="SM00898">
    <property type="entry name" value="Fapy_DNA_glyco"/>
    <property type="match status" value="1"/>
</dbReference>
<dbReference type="SMART" id="SM01232">
    <property type="entry name" value="H2TH"/>
    <property type="match status" value="1"/>
</dbReference>
<dbReference type="SUPFAM" id="SSF57716">
    <property type="entry name" value="Glucocorticoid receptor-like (DNA-binding domain)"/>
    <property type="match status" value="1"/>
</dbReference>
<dbReference type="SUPFAM" id="SSF81624">
    <property type="entry name" value="N-terminal domain of MutM-like DNA repair proteins"/>
    <property type="match status" value="1"/>
</dbReference>
<dbReference type="SUPFAM" id="SSF46946">
    <property type="entry name" value="S13-like H2TH domain"/>
    <property type="match status" value="1"/>
</dbReference>
<dbReference type="PROSITE" id="PS51068">
    <property type="entry name" value="FPG_CAT"/>
    <property type="match status" value="1"/>
</dbReference>
<dbReference type="PROSITE" id="PS01242">
    <property type="entry name" value="ZF_FPG_1"/>
    <property type="match status" value="1"/>
</dbReference>
<dbReference type="PROSITE" id="PS51066">
    <property type="entry name" value="ZF_FPG_2"/>
    <property type="match status" value="1"/>
</dbReference>
<sequence>MPELPEVEVTRLSFAERIAGARIEAVLVGKPLRWPLGCETQQLQGQRVLAVRRRGKYLLLDLSEGLLLMHLGMSGSVSFGLNLPVTGKHDHFDMVTSLGTLRLHDPRRFGAVVYASGEDDAVAKKLLGRLGVEPLSDAFDALVFHQWLKGRKTAIKPLLLAGQAVVGVGNIYASEALFLAGIRPTTKASLISKPRAARLHRAIQDVLTNAVAKGGSTLRDFSNADGEAGHFQLDAMVYDRAGLPCRVCAAPIKSIRQGQRSSFYCATCQKP</sequence>
<comment type="function">
    <text evidence="2">Involved in base excision repair of DNA damaged by oxidation or by mutagenic agents. Acts as a DNA glycosylase that recognizes and removes damaged bases. Has a preference for oxidized purines, such as 7,8-dihydro-8-oxoguanine (8-oxoG). Has AP (apurinic/apyrimidinic) lyase activity and introduces nicks in the DNA strand. Cleaves the DNA backbone by beta-delta elimination to generate a single-strand break at the site of the removed base with both 3'- and 5'-phosphates.</text>
</comment>
<comment type="catalytic activity">
    <reaction evidence="2">
        <text>Hydrolysis of DNA containing ring-opened 7-methylguanine residues, releasing 2,6-diamino-4-hydroxy-5-(N-methyl)formamidopyrimidine.</text>
        <dbReference type="EC" id="3.2.2.23"/>
    </reaction>
</comment>
<comment type="catalytic activity">
    <reaction evidence="2">
        <text>2'-deoxyribonucleotide-(2'-deoxyribose 5'-phosphate)-2'-deoxyribonucleotide-DNA = a 3'-end 2'-deoxyribonucleotide-(2,3-dehydro-2,3-deoxyribose 5'-phosphate)-DNA + a 5'-end 5'-phospho-2'-deoxyribonucleoside-DNA + H(+)</text>
        <dbReference type="Rhea" id="RHEA:66592"/>
        <dbReference type="Rhea" id="RHEA-COMP:13180"/>
        <dbReference type="Rhea" id="RHEA-COMP:16897"/>
        <dbReference type="Rhea" id="RHEA-COMP:17067"/>
        <dbReference type="ChEBI" id="CHEBI:15378"/>
        <dbReference type="ChEBI" id="CHEBI:136412"/>
        <dbReference type="ChEBI" id="CHEBI:157695"/>
        <dbReference type="ChEBI" id="CHEBI:167181"/>
        <dbReference type="EC" id="4.2.99.18"/>
    </reaction>
</comment>
<comment type="cofactor">
    <cofactor evidence="2">
        <name>Zn(2+)</name>
        <dbReference type="ChEBI" id="CHEBI:29105"/>
    </cofactor>
    <text evidence="2">Binds 1 zinc ion per subunit.</text>
</comment>
<comment type="subunit">
    <text evidence="2">Monomer.</text>
</comment>
<comment type="similarity">
    <text evidence="2">Belongs to the FPG family.</text>
</comment>
<feature type="initiator methionine" description="Removed" evidence="1">
    <location>
        <position position="1"/>
    </location>
</feature>
<feature type="chain" id="PRO_1000008733" description="Formamidopyrimidine-DNA glycosylase">
    <location>
        <begin position="2"/>
        <end position="271"/>
    </location>
</feature>
<feature type="zinc finger region" description="FPG-type" evidence="2">
    <location>
        <begin position="236"/>
        <end position="270"/>
    </location>
</feature>
<feature type="active site" description="Schiff-base intermediate with DNA" evidence="2">
    <location>
        <position position="2"/>
    </location>
</feature>
<feature type="active site" description="Proton donor" evidence="2">
    <location>
        <position position="3"/>
    </location>
</feature>
<feature type="active site" description="Proton donor; for beta-elimination activity" evidence="2">
    <location>
        <position position="56"/>
    </location>
</feature>
<feature type="active site" description="Proton donor; for delta-elimination activity" evidence="2">
    <location>
        <position position="260"/>
    </location>
</feature>
<feature type="binding site" evidence="2">
    <location>
        <position position="89"/>
    </location>
    <ligand>
        <name>DNA</name>
        <dbReference type="ChEBI" id="CHEBI:16991"/>
    </ligand>
</feature>
<feature type="binding site" evidence="2">
    <location>
        <position position="107"/>
    </location>
    <ligand>
        <name>DNA</name>
        <dbReference type="ChEBI" id="CHEBI:16991"/>
    </ligand>
</feature>
<feature type="binding site" evidence="2">
    <location>
        <position position="151"/>
    </location>
    <ligand>
        <name>DNA</name>
        <dbReference type="ChEBI" id="CHEBI:16991"/>
    </ligand>
</feature>
<keyword id="KW-0227">DNA damage</keyword>
<keyword id="KW-0234">DNA repair</keyword>
<keyword id="KW-0238">DNA-binding</keyword>
<keyword id="KW-0326">Glycosidase</keyword>
<keyword id="KW-0378">Hydrolase</keyword>
<keyword id="KW-0456">Lyase</keyword>
<keyword id="KW-0479">Metal-binding</keyword>
<keyword id="KW-0511">Multifunctional enzyme</keyword>
<keyword id="KW-1185">Reference proteome</keyword>
<keyword id="KW-0862">Zinc</keyword>
<keyword id="KW-0863">Zinc-finger</keyword>
<accession>A1VKP2</accession>
<gene>
    <name evidence="2" type="primary">mutM</name>
    <name evidence="2" type="synonym">fpg</name>
    <name type="ordered locus">Pnap_0903</name>
</gene>
<reference key="1">
    <citation type="journal article" date="2009" name="Environ. Microbiol.">
        <title>The genome of Polaromonas naphthalenivorans strain CJ2, isolated from coal tar-contaminated sediment, reveals physiological and metabolic versatility and evolution through extensive horizontal gene transfer.</title>
        <authorList>
            <person name="Yagi J.M."/>
            <person name="Sims D."/>
            <person name="Brettin T."/>
            <person name="Bruce D."/>
            <person name="Madsen E.L."/>
        </authorList>
    </citation>
    <scope>NUCLEOTIDE SEQUENCE [LARGE SCALE GENOMIC DNA]</scope>
    <source>
        <strain>CJ2</strain>
    </source>
</reference>
<evidence type="ECO:0000250" key="1"/>
<evidence type="ECO:0000255" key="2">
    <source>
        <dbReference type="HAMAP-Rule" id="MF_00103"/>
    </source>
</evidence>
<organism>
    <name type="scientific">Polaromonas naphthalenivorans (strain CJ2)</name>
    <dbReference type="NCBI Taxonomy" id="365044"/>
    <lineage>
        <taxon>Bacteria</taxon>
        <taxon>Pseudomonadati</taxon>
        <taxon>Pseudomonadota</taxon>
        <taxon>Betaproteobacteria</taxon>
        <taxon>Burkholderiales</taxon>
        <taxon>Comamonadaceae</taxon>
        <taxon>Polaromonas</taxon>
    </lineage>
</organism>
<name>FPG_POLNA</name>